<feature type="initiator methionine" description="Removed" evidence="2">
    <location>
        <position position="1"/>
    </location>
</feature>
<feature type="chain" id="PRO_0000289162" description="Nonsense-mediated mRNA decay factor SMG9">
    <location>
        <begin position="2"/>
        <end position="520"/>
    </location>
</feature>
<feature type="region of interest" description="Disordered" evidence="3">
    <location>
        <begin position="1"/>
        <end position="143"/>
    </location>
</feature>
<feature type="compositionally biased region" description="Basic and acidic residues" evidence="3">
    <location>
        <begin position="36"/>
        <end position="53"/>
    </location>
</feature>
<feature type="compositionally biased region" description="Pro residues" evidence="3">
    <location>
        <begin position="78"/>
        <end position="94"/>
    </location>
</feature>
<feature type="compositionally biased region" description="Low complexity" evidence="3">
    <location>
        <begin position="109"/>
        <end position="121"/>
    </location>
</feature>
<feature type="compositionally biased region" description="Pro residues" evidence="3">
    <location>
        <begin position="122"/>
        <end position="133"/>
    </location>
</feature>
<feature type="modified residue" description="N-acetylserine" evidence="2">
    <location>
        <position position="2"/>
    </location>
</feature>
<feature type="modified residue" description="Phosphoserine" evidence="2">
    <location>
        <position position="2"/>
    </location>
</feature>
<feature type="modified residue" description="Phosphoserine" evidence="2">
    <location>
        <position position="4"/>
    </location>
</feature>
<feature type="modified residue" description="Phosphoserine" evidence="2">
    <location>
        <position position="7"/>
    </location>
</feature>
<feature type="modified residue" description="Phosphoserine" evidence="2">
    <location>
        <position position="32"/>
    </location>
</feature>
<feature type="modified residue" description="Phosphoserine" evidence="2">
    <location>
        <position position="53"/>
    </location>
</feature>
<feature type="modified residue" description="Phosphoserine" evidence="2">
    <location>
        <position position="451"/>
    </location>
</feature>
<accession>Q2YDD2</accession>
<dbReference type="EMBL" id="BC110277">
    <property type="protein sequence ID" value="AAI10278.1"/>
    <property type="molecule type" value="mRNA"/>
</dbReference>
<dbReference type="RefSeq" id="NP_001040024.1">
    <property type="nucleotide sequence ID" value="NM_001046559.1"/>
</dbReference>
<dbReference type="SMR" id="Q2YDD2"/>
<dbReference type="FunCoup" id="Q2YDD2">
    <property type="interactions" value="2977"/>
</dbReference>
<dbReference type="STRING" id="9913.ENSBTAP00000015684"/>
<dbReference type="PaxDb" id="9913-ENSBTAP00000015684"/>
<dbReference type="GeneID" id="615492"/>
<dbReference type="KEGG" id="bta:615492"/>
<dbReference type="CTD" id="56006"/>
<dbReference type="eggNOG" id="KOG4181">
    <property type="taxonomic scope" value="Eukaryota"/>
</dbReference>
<dbReference type="InParanoid" id="Q2YDD2"/>
<dbReference type="OrthoDB" id="79514at2759"/>
<dbReference type="Proteomes" id="UP000009136">
    <property type="component" value="Unplaced"/>
</dbReference>
<dbReference type="GO" id="GO:0007420">
    <property type="term" value="P:brain development"/>
    <property type="evidence" value="ECO:0000250"/>
    <property type="project" value="UniProtKB"/>
</dbReference>
<dbReference type="GO" id="GO:0001654">
    <property type="term" value="P:eye development"/>
    <property type="evidence" value="ECO:0000250"/>
    <property type="project" value="UniProtKB"/>
</dbReference>
<dbReference type="GO" id="GO:0007507">
    <property type="term" value="P:heart development"/>
    <property type="evidence" value="ECO:0000250"/>
    <property type="project" value="UniProtKB"/>
</dbReference>
<dbReference type="GO" id="GO:0000184">
    <property type="term" value="P:nuclear-transcribed mRNA catabolic process, nonsense-mediated decay"/>
    <property type="evidence" value="ECO:0000318"/>
    <property type="project" value="GO_Central"/>
</dbReference>
<dbReference type="FunFam" id="3.40.50.300:FF:001272">
    <property type="entry name" value="SMG9 isoform 2"/>
    <property type="match status" value="1"/>
</dbReference>
<dbReference type="Gene3D" id="3.40.50.300">
    <property type="entry name" value="P-loop containing nucleotide triphosphate hydrolases"/>
    <property type="match status" value="1"/>
</dbReference>
<dbReference type="InterPro" id="IPR027417">
    <property type="entry name" value="P-loop_NTPase"/>
</dbReference>
<dbReference type="InterPro" id="IPR039177">
    <property type="entry name" value="SMG9"/>
</dbReference>
<dbReference type="PANTHER" id="PTHR14270">
    <property type="entry name" value="NONSENSE-MEDIATED MRNA DECAY FACTOR SMG9"/>
    <property type="match status" value="1"/>
</dbReference>
<dbReference type="PANTHER" id="PTHR14270:SF0">
    <property type="entry name" value="NONSENSE-MEDIATED MRNA DECAY FACTOR SMG9"/>
    <property type="match status" value="1"/>
</dbReference>
<protein>
    <recommendedName>
        <fullName evidence="2">Nonsense-mediated mRNA decay factor SMG9</fullName>
    </recommendedName>
</protein>
<organism>
    <name type="scientific">Bos taurus</name>
    <name type="common">Bovine</name>
    <dbReference type="NCBI Taxonomy" id="9913"/>
    <lineage>
        <taxon>Eukaryota</taxon>
        <taxon>Metazoa</taxon>
        <taxon>Chordata</taxon>
        <taxon>Craniata</taxon>
        <taxon>Vertebrata</taxon>
        <taxon>Euteleostomi</taxon>
        <taxon>Mammalia</taxon>
        <taxon>Eutheria</taxon>
        <taxon>Laurasiatheria</taxon>
        <taxon>Artiodactyla</taxon>
        <taxon>Ruminantia</taxon>
        <taxon>Pecora</taxon>
        <taxon>Bovidae</taxon>
        <taxon>Bovinae</taxon>
        <taxon>Bos</taxon>
    </lineage>
</organism>
<evidence type="ECO:0000250" key="1">
    <source>
        <dbReference type="UniProtKB" id="Q9DB90"/>
    </source>
</evidence>
<evidence type="ECO:0000250" key="2">
    <source>
        <dbReference type="UniProtKB" id="Q9H0W8"/>
    </source>
</evidence>
<evidence type="ECO:0000256" key="3">
    <source>
        <dbReference type="SAM" id="MobiDB-lite"/>
    </source>
</evidence>
<evidence type="ECO:0000305" key="4"/>
<gene>
    <name evidence="2" type="primary">SMG9</name>
</gene>
<proteinExistence type="evidence at transcript level"/>
<reference key="1">
    <citation type="submission" date="2005-11" db="EMBL/GenBank/DDBJ databases">
        <authorList>
            <consortium name="NIH - Mammalian Gene Collection (MGC) project"/>
        </authorList>
    </citation>
    <scope>NUCLEOTIDE SEQUENCE [LARGE SCALE MRNA]</scope>
    <source>
        <strain>Crossbred X Angus</strain>
        <tissue>Liver</tissue>
    </source>
</reference>
<name>SMG9_BOVIN</name>
<keyword id="KW-0007">Acetylation</keyword>
<keyword id="KW-0866">Nonsense-mediated mRNA decay</keyword>
<keyword id="KW-0597">Phosphoprotein</keyword>
<keyword id="KW-1185">Reference proteome</keyword>
<sequence length="520" mass="57638">MSESGHSQPGLYGIERRRRWKEPGPGGPQNLSGPGGRERDYIAPWERERRDGSEETSTAVMQKTPIILSKPPAERSKQPPPPAAPAAPPAPAPLEKPIVLMKPREEGKGPAATTSTSTPEGTAPPPPAAPVPPKGEKEGQRPTQPVYQIQNRGMGTAAPAAMDPVVGQAKLLPPERMKHSIKLVDDQMNWCDSAIEYLLDQTDVLVVGVLGLQGTGKSMVMSLLSANTPEEDQRAYVFRAQSAEMKERGGNQTSGIDFFITQERIVFLDTQPILSPSILDHLINNDRKLPPEYNLPHTYVEMQSLQIAAFLFTVCHVVIVVQDWFTDLSLYRFLQTAEMVKPSTPSPSHESSSSSGSEEGAEYYPHLVFLQNKARREDFCPRKLRQMHLMIDQLMAHSHLRYKGTLSMLQCNVFPGLPPDFLDSEVNLFLMPFMDSETESETPPRAGPGSSPLFSLLPGYRGHPSFQSLVSKLRSQVMSMARPQLSHTILTEKNWFHYAARIWDGVKKSSALAEYSRLLA</sequence>
<comment type="function">
    <text evidence="1 2">Involved in nonsense-mediated decay (NMD) of mRNAs containing premature stop codons. Is recruited by release factors to stalled ribosomes together with SMG1 and SMG8 (forming the SMG1C protein kinase complex) and, in the SMG1C complex, is required for the efficient association between SMG1 and SMG8 (By similarity). Plays a role in brain, heart, and eye development.</text>
</comment>
<comment type="subunit">
    <text evidence="2">Self-associates to form homodimers and forms heterodimers with SMG8; these assembly forms may represent SMG1C intermediate forms (By similarity). Component of the SMG1C complex composed of SMG1, SMG8 and SMG9. Self-associates to form homodimers and forms heterodimers with SMG8; these assembly forms may represent SMG1C intermediate forms (By similarity). Interacts with DHX34; the interaction is RNA-independent (By similarity).</text>
</comment>
<comment type="PTM">
    <text evidence="2">Phosphorylated by SMG1.</text>
</comment>
<comment type="similarity">
    <text evidence="4">Belongs to the SMG9 family.</text>
</comment>